<sequence>MANIVNFPIIDMEKLNNYNGVERSLVLDQIKDACHNWGFFQVVNHSLSHELMDKVERMTKEHYKKFREQKFKDMVQTKGLVSAESQVNDIDWESTFYLRHRPTSNISEVPDLDDQYRKLMKEFAAQIERLSEQLLDLLCENLGLEKAYLKNAFYGANGPTFGTKVSNYPPCPKPDLIKGLRAHTDAGGIILLFQDDKVSGLQLLKDGHWVDVPPMKHSIVVNLGDQLEVITNGKYKSVMHRVIAQTDGNRMSIASFYNPGSDAVIYPAPTLVEKEEEKCRAYPKFVFEDYMNLYLKLKFQEKEPRFEAMKAMETTGPIPTA</sequence>
<comment type="catalytic activity">
    <reaction>
        <text>1-aminocyclopropane-1-carboxylate + L-ascorbate + O2 = ethene + L-dehydroascorbate + hydrogen cyanide + CO2 + 2 H2O</text>
        <dbReference type="Rhea" id="RHEA:23640"/>
        <dbReference type="ChEBI" id="CHEBI:15377"/>
        <dbReference type="ChEBI" id="CHEBI:15379"/>
        <dbReference type="ChEBI" id="CHEBI:16526"/>
        <dbReference type="ChEBI" id="CHEBI:18153"/>
        <dbReference type="ChEBI" id="CHEBI:18407"/>
        <dbReference type="ChEBI" id="CHEBI:38290"/>
        <dbReference type="ChEBI" id="CHEBI:58360"/>
        <dbReference type="ChEBI" id="CHEBI:58539"/>
        <dbReference type="EC" id="1.14.17.4"/>
    </reaction>
</comment>
<comment type="cofactor">
    <cofactor>
        <name>Fe cation</name>
        <dbReference type="ChEBI" id="CHEBI:24875"/>
    </cofactor>
</comment>
<comment type="pathway">
    <text>Alkene biosynthesis; ethylene biosynthesis via S-adenosyl-L-methionine; ethylene from S-adenosyl-L-methionine: step 2/2.</text>
</comment>
<comment type="similarity">
    <text evidence="2">Belongs to the iron/ascorbate-dependent oxidoreductase family.</text>
</comment>
<proteinExistence type="evidence at transcript level"/>
<protein>
    <recommendedName>
        <fullName>Probable 1-aminocyclopropane-1-carboxylate oxidase</fullName>
        <shortName>ACC oxidase</shortName>
        <ecNumber>1.14.17.4</ecNumber>
    </recommendedName>
    <alternativeName>
        <fullName>Ethylene-forming enzyme</fullName>
        <shortName>EFE</shortName>
    </alternativeName>
    <alternativeName>
        <fullName>Senescence-related protein</fullName>
    </alternativeName>
</protein>
<organism>
    <name type="scientific">Dianthus caryophyllus</name>
    <name type="common">Carnation</name>
    <name type="synonym">Clove pink</name>
    <dbReference type="NCBI Taxonomy" id="3570"/>
    <lineage>
        <taxon>Eukaryota</taxon>
        <taxon>Viridiplantae</taxon>
        <taxon>Streptophyta</taxon>
        <taxon>Embryophyta</taxon>
        <taxon>Tracheophyta</taxon>
        <taxon>Spermatophyta</taxon>
        <taxon>Magnoliopsida</taxon>
        <taxon>eudicotyledons</taxon>
        <taxon>Gunneridae</taxon>
        <taxon>Pentapetalae</taxon>
        <taxon>Caryophyllales</taxon>
        <taxon>Caryophyllaceae</taxon>
        <taxon>Caryophylleae</taxon>
        <taxon>Dianthus</taxon>
    </lineage>
</organism>
<evidence type="ECO:0000255" key="1">
    <source>
        <dbReference type="PROSITE-ProRule" id="PRU00805"/>
    </source>
</evidence>
<evidence type="ECO:0000305" key="2"/>
<dbReference type="EC" id="1.14.17.4"/>
<dbReference type="EMBL" id="M62380">
    <property type="protein sequence ID" value="AAA33276.1"/>
    <property type="molecule type" value="mRNA"/>
</dbReference>
<dbReference type="PIR" id="S30606">
    <property type="entry name" value="S30606"/>
</dbReference>
<dbReference type="SMR" id="P31528"/>
<dbReference type="BRENDA" id="1.14.17.4">
    <property type="organism ID" value="1925"/>
</dbReference>
<dbReference type="UniPathway" id="UPA00384">
    <property type="reaction ID" value="UER00563"/>
</dbReference>
<dbReference type="GO" id="GO:0009815">
    <property type="term" value="F:1-aminocyclopropane-1-carboxylate oxidase activity"/>
    <property type="evidence" value="ECO:0007669"/>
    <property type="project" value="UniProtKB-EC"/>
</dbReference>
<dbReference type="GO" id="GO:0031418">
    <property type="term" value="F:L-ascorbic acid binding"/>
    <property type="evidence" value="ECO:0007669"/>
    <property type="project" value="UniProtKB-KW"/>
</dbReference>
<dbReference type="GO" id="GO:0046872">
    <property type="term" value="F:metal ion binding"/>
    <property type="evidence" value="ECO:0007669"/>
    <property type="project" value="UniProtKB-KW"/>
</dbReference>
<dbReference type="GO" id="GO:0009693">
    <property type="term" value="P:ethylene biosynthetic process"/>
    <property type="evidence" value="ECO:0007669"/>
    <property type="project" value="UniProtKB-UniPathway"/>
</dbReference>
<dbReference type="GO" id="GO:0009835">
    <property type="term" value="P:fruit ripening"/>
    <property type="evidence" value="ECO:0007669"/>
    <property type="project" value="UniProtKB-KW"/>
</dbReference>
<dbReference type="FunFam" id="2.60.120.330:FF:000002">
    <property type="entry name" value="1-aminocyclopropane-1-carboxylate oxidase 1"/>
    <property type="match status" value="1"/>
</dbReference>
<dbReference type="Gene3D" id="2.60.120.330">
    <property type="entry name" value="B-lactam Antibiotic, Isopenicillin N Synthase, Chain"/>
    <property type="match status" value="1"/>
</dbReference>
<dbReference type="InterPro" id="IPR026992">
    <property type="entry name" value="DIOX_N"/>
</dbReference>
<dbReference type="InterPro" id="IPR044861">
    <property type="entry name" value="IPNS-like_FE2OG_OXY"/>
</dbReference>
<dbReference type="InterPro" id="IPR027443">
    <property type="entry name" value="IPNS-like_sf"/>
</dbReference>
<dbReference type="InterPro" id="IPR005123">
    <property type="entry name" value="Oxoglu/Fe-dep_dioxygenase_dom"/>
</dbReference>
<dbReference type="InterPro" id="IPR050295">
    <property type="entry name" value="Plant_2OG-oxidoreductases"/>
</dbReference>
<dbReference type="PANTHER" id="PTHR47991">
    <property type="entry name" value="OXOGLUTARATE/IRON-DEPENDENT DIOXYGENASE"/>
    <property type="match status" value="1"/>
</dbReference>
<dbReference type="Pfam" id="PF03171">
    <property type="entry name" value="2OG-FeII_Oxy"/>
    <property type="match status" value="1"/>
</dbReference>
<dbReference type="Pfam" id="PF14226">
    <property type="entry name" value="DIOX_N"/>
    <property type="match status" value="1"/>
</dbReference>
<dbReference type="SUPFAM" id="SSF51197">
    <property type="entry name" value="Clavaminate synthase-like"/>
    <property type="match status" value="1"/>
</dbReference>
<dbReference type="PROSITE" id="PS51471">
    <property type="entry name" value="FE2OG_OXY"/>
    <property type="match status" value="1"/>
</dbReference>
<gene>
    <name type="primary">ACO</name>
    <name type="synonym">CARSR120</name>
</gene>
<keyword id="KW-0266">Ethylene biosynthesis</keyword>
<keyword id="KW-0292">Fruit ripening</keyword>
<keyword id="KW-0408">Iron</keyword>
<keyword id="KW-0479">Metal-binding</keyword>
<keyword id="KW-0560">Oxidoreductase</keyword>
<keyword id="KW-0847">Vitamin C</keyword>
<accession>P31528</accession>
<feature type="chain" id="PRO_0000067257" description="Probable 1-aminocyclopropane-1-carboxylate oxidase">
    <location>
        <begin position="1"/>
        <end position="321"/>
    </location>
</feature>
<feature type="domain" description="Fe2OG dioxygenase" evidence="1">
    <location>
        <begin position="159"/>
        <end position="259"/>
    </location>
</feature>
<feature type="binding site" evidence="1">
    <location>
        <position position="183"/>
    </location>
    <ligand>
        <name>Fe cation</name>
        <dbReference type="ChEBI" id="CHEBI:24875"/>
    </ligand>
</feature>
<feature type="binding site" evidence="1">
    <location>
        <position position="185"/>
    </location>
    <ligand>
        <name>Fe cation</name>
        <dbReference type="ChEBI" id="CHEBI:24875"/>
    </ligand>
</feature>
<feature type="binding site" evidence="1">
    <location>
        <position position="240"/>
    </location>
    <ligand>
        <name>Fe cation</name>
        <dbReference type="ChEBI" id="CHEBI:24875"/>
    </ligand>
</feature>
<name>ACCO_DIACA</name>
<reference key="1">
    <citation type="journal article" date="1991" name="Plant Physiol.">
        <title>A flower senescence-related mRNA from carnation shares sequence similarity with fruit ripening-related mRNAs involved in ethylene biosynthesis.</title>
        <authorList>
            <person name="Wang H."/>
            <person name="Woodson W.R."/>
        </authorList>
    </citation>
    <scope>NUCLEOTIDE SEQUENCE [MRNA]</scope>
</reference>